<geneLocation type="mitochondrion"/>
<comment type="function">
    <text evidence="2">Component of the ubiquinol-cytochrome c reductase complex (complex III or cytochrome b-c1 complex) that is part of the mitochondrial respiratory chain. The b-c1 complex mediates electron transfer from ubiquinol to cytochrome c. Contributes to the generation of a proton gradient across the mitochondrial membrane that is then used for ATP synthesis.</text>
</comment>
<comment type="cofactor">
    <cofactor evidence="2">
        <name>heme b</name>
        <dbReference type="ChEBI" id="CHEBI:60344"/>
    </cofactor>
    <text evidence="2">Binds 2 heme b groups non-covalently.</text>
</comment>
<comment type="subunit">
    <text evidence="2">The cytochrome bc1 complex contains 11 subunits: 3 respiratory subunits (MT-CYB, CYC1 and UQCRFS1), 2 core proteins (UQCRC1 and UQCRC2) and 6 low-molecular weight proteins (UQCRH/QCR6, UQCRB/QCR7, UQCRQ/QCR8, UQCR10/QCR9, UQCR11/QCR10 and a cleavage product of UQCRFS1). This cytochrome bc1 complex then forms a dimer.</text>
</comment>
<comment type="subcellular location">
    <subcellularLocation>
        <location evidence="2">Mitochondrion inner membrane</location>
        <topology evidence="2">Multi-pass membrane protein</topology>
    </subcellularLocation>
</comment>
<comment type="miscellaneous">
    <text evidence="1">Heme 1 (or BL or b562) is low-potential and absorbs at about 562 nm, and heme 2 (or BH or b566) is high-potential and absorbs at about 566 nm.</text>
</comment>
<comment type="similarity">
    <text evidence="3 4">Belongs to the cytochrome b family.</text>
</comment>
<comment type="caution">
    <text evidence="2">The full-length protein contains only eight transmembrane helices, not nine as predicted by bioinformatics tools.</text>
</comment>
<sequence length="379" mass="42681">MINIQKTHPLLKIVNNAFIDLPAPSNISSWWNFGSLLGICLILQILTGLFLAMHYTADTTTAFSSVTHICRDVNYGWIIRYMHANGASMFFICLFMHVGRGLYYGSYAYTETWNIGVILLFATMATAFMGYVLPWGQMSFWGATVITNLLSAIPYIGTNLVEWIWGGFSVDKATLTRFFAFHFIFPFIIAALAMVHLLFLHETGSNNPTGISSDADKIPFHPYYTIKDILGVLLLILALMILVLFSPDLLGDPDNYTPANPLNTPPHIKPEWYFLFAYAILRSIPNKLGGVLALVLSILILVLMPLLHTSKQRSMMFRPISQCLFWILVADLLTLTWIGGQPVEHPYIIIGQLASIMYFLLILVLMPMASTIENNLLKW</sequence>
<organism>
    <name type="scientific">Cephalophus silvicultor</name>
    <name type="common">Yellow-backed duiker</name>
    <dbReference type="NCBI Taxonomy" id="50347"/>
    <lineage>
        <taxon>Eukaryota</taxon>
        <taxon>Metazoa</taxon>
        <taxon>Chordata</taxon>
        <taxon>Craniata</taxon>
        <taxon>Vertebrata</taxon>
        <taxon>Euteleostomi</taxon>
        <taxon>Mammalia</taxon>
        <taxon>Eutheria</taxon>
        <taxon>Laurasiatheria</taxon>
        <taxon>Artiodactyla</taxon>
        <taxon>Ruminantia</taxon>
        <taxon>Pecora</taxon>
        <taxon>Bovidae</taxon>
        <taxon>Cephalophinae</taxon>
        <taxon>Cephalophus</taxon>
    </lineage>
</organism>
<accession>Q9B5Q8</accession>
<proteinExistence type="inferred from homology"/>
<protein>
    <recommendedName>
        <fullName>Cytochrome b</fullName>
    </recommendedName>
    <alternativeName>
        <fullName>Complex III subunit 3</fullName>
    </alternativeName>
    <alternativeName>
        <fullName>Complex III subunit III</fullName>
    </alternativeName>
    <alternativeName>
        <fullName>Cytochrome b-c1 complex subunit 3</fullName>
    </alternativeName>
    <alternativeName>
        <fullName>Ubiquinol-cytochrome-c reductase complex cytochrome b subunit</fullName>
    </alternativeName>
</protein>
<name>CYB_CEPSI</name>
<dbReference type="EMBL" id="AF153898">
    <property type="protein sequence ID" value="AAK26686.1"/>
    <property type="molecule type" value="Genomic_DNA"/>
</dbReference>
<dbReference type="SMR" id="Q9B5Q8"/>
<dbReference type="GO" id="GO:0005743">
    <property type="term" value="C:mitochondrial inner membrane"/>
    <property type="evidence" value="ECO:0007669"/>
    <property type="project" value="UniProtKB-SubCell"/>
</dbReference>
<dbReference type="GO" id="GO:0045275">
    <property type="term" value="C:respiratory chain complex III"/>
    <property type="evidence" value="ECO:0007669"/>
    <property type="project" value="InterPro"/>
</dbReference>
<dbReference type="GO" id="GO:0046872">
    <property type="term" value="F:metal ion binding"/>
    <property type="evidence" value="ECO:0007669"/>
    <property type="project" value="UniProtKB-KW"/>
</dbReference>
<dbReference type="GO" id="GO:0008121">
    <property type="term" value="F:ubiquinol-cytochrome-c reductase activity"/>
    <property type="evidence" value="ECO:0007669"/>
    <property type="project" value="InterPro"/>
</dbReference>
<dbReference type="GO" id="GO:0006122">
    <property type="term" value="P:mitochondrial electron transport, ubiquinol to cytochrome c"/>
    <property type="evidence" value="ECO:0007669"/>
    <property type="project" value="TreeGrafter"/>
</dbReference>
<dbReference type="CDD" id="cd00290">
    <property type="entry name" value="cytochrome_b_C"/>
    <property type="match status" value="1"/>
</dbReference>
<dbReference type="CDD" id="cd00284">
    <property type="entry name" value="Cytochrome_b_N"/>
    <property type="match status" value="1"/>
</dbReference>
<dbReference type="FunFam" id="1.20.810.10:FF:000002">
    <property type="entry name" value="Cytochrome b"/>
    <property type="match status" value="1"/>
</dbReference>
<dbReference type="Gene3D" id="1.20.810.10">
    <property type="entry name" value="Cytochrome Bc1 Complex, Chain C"/>
    <property type="match status" value="1"/>
</dbReference>
<dbReference type="InterPro" id="IPR005798">
    <property type="entry name" value="Cyt_b/b6_C"/>
</dbReference>
<dbReference type="InterPro" id="IPR036150">
    <property type="entry name" value="Cyt_b/b6_C_sf"/>
</dbReference>
<dbReference type="InterPro" id="IPR005797">
    <property type="entry name" value="Cyt_b/b6_N"/>
</dbReference>
<dbReference type="InterPro" id="IPR027387">
    <property type="entry name" value="Cytb/b6-like_sf"/>
</dbReference>
<dbReference type="InterPro" id="IPR030689">
    <property type="entry name" value="Cytochrome_b"/>
</dbReference>
<dbReference type="InterPro" id="IPR048260">
    <property type="entry name" value="Cytochrome_b_C_euk/bac"/>
</dbReference>
<dbReference type="InterPro" id="IPR048259">
    <property type="entry name" value="Cytochrome_b_N_euk/bac"/>
</dbReference>
<dbReference type="InterPro" id="IPR016174">
    <property type="entry name" value="Di-haem_cyt_TM"/>
</dbReference>
<dbReference type="PANTHER" id="PTHR19271">
    <property type="entry name" value="CYTOCHROME B"/>
    <property type="match status" value="1"/>
</dbReference>
<dbReference type="PANTHER" id="PTHR19271:SF16">
    <property type="entry name" value="CYTOCHROME B"/>
    <property type="match status" value="1"/>
</dbReference>
<dbReference type="Pfam" id="PF00032">
    <property type="entry name" value="Cytochrom_B_C"/>
    <property type="match status" value="1"/>
</dbReference>
<dbReference type="Pfam" id="PF00033">
    <property type="entry name" value="Cytochrome_B"/>
    <property type="match status" value="1"/>
</dbReference>
<dbReference type="PIRSF" id="PIRSF038885">
    <property type="entry name" value="COB"/>
    <property type="match status" value="1"/>
</dbReference>
<dbReference type="SUPFAM" id="SSF81648">
    <property type="entry name" value="a domain/subunit of cytochrome bc1 complex (Ubiquinol-cytochrome c reductase)"/>
    <property type="match status" value="1"/>
</dbReference>
<dbReference type="SUPFAM" id="SSF81342">
    <property type="entry name" value="Transmembrane di-heme cytochromes"/>
    <property type="match status" value="1"/>
</dbReference>
<dbReference type="PROSITE" id="PS51003">
    <property type="entry name" value="CYTB_CTER"/>
    <property type="match status" value="1"/>
</dbReference>
<dbReference type="PROSITE" id="PS51002">
    <property type="entry name" value="CYTB_NTER"/>
    <property type="match status" value="1"/>
</dbReference>
<reference key="1">
    <citation type="journal article" date="2001" name="Mol. Phylogenet. Evol.">
        <title>Retrieval of four adaptive lineages in duiker antelope: evidence from mitochondrial DNA sequences and fluorescence in situ hybridization.</title>
        <authorList>
            <person name="van Vuuren B.J."/>
            <person name="Robinson T.J."/>
        </authorList>
    </citation>
    <scope>NUCLEOTIDE SEQUENCE [GENOMIC DNA]</scope>
</reference>
<keyword id="KW-0249">Electron transport</keyword>
<keyword id="KW-0349">Heme</keyword>
<keyword id="KW-0408">Iron</keyword>
<keyword id="KW-0472">Membrane</keyword>
<keyword id="KW-0479">Metal-binding</keyword>
<keyword id="KW-0496">Mitochondrion</keyword>
<keyword id="KW-0999">Mitochondrion inner membrane</keyword>
<keyword id="KW-0679">Respiratory chain</keyword>
<keyword id="KW-0812">Transmembrane</keyword>
<keyword id="KW-1133">Transmembrane helix</keyword>
<keyword id="KW-0813">Transport</keyword>
<keyword id="KW-0830">Ubiquinone</keyword>
<feature type="chain" id="PRO_0000254785" description="Cytochrome b">
    <location>
        <begin position="1"/>
        <end position="379"/>
    </location>
</feature>
<feature type="transmembrane region" description="Helical" evidence="2">
    <location>
        <begin position="33"/>
        <end position="53"/>
    </location>
</feature>
<feature type="transmembrane region" description="Helical" evidence="2">
    <location>
        <begin position="77"/>
        <end position="98"/>
    </location>
</feature>
<feature type="transmembrane region" description="Helical" evidence="2">
    <location>
        <begin position="113"/>
        <end position="133"/>
    </location>
</feature>
<feature type="transmembrane region" description="Helical" evidence="2">
    <location>
        <begin position="178"/>
        <end position="198"/>
    </location>
</feature>
<feature type="transmembrane region" description="Helical" evidence="2">
    <location>
        <begin position="226"/>
        <end position="246"/>
    </location>
</feature>
<feature type="transmembrane region" description="Helical" evidence="2">
    <location>
        <begin position="288"/>
        <end position="308"/>
    </location>
</feature>
<feature type="transmembrane region" description="Helical" evidence="2">
    <location>
        <begin position="320"/>
        <end position="340"/>
    </location>
</feature>
<feature type="transmembrane region" description="Helical" evidence="2">
    <location>
        <begin position="347"/>
        <end position="367"/>
    </location>
</feature>
<feature type="binding site" description="axial binding residue" evidence="2">
    <location>
        <position position="83"/>
    </location>
    <ligand>
        <name>heme b</name>
        <dbReference type="ChEBI" id="CHEBI:60344"/>
        <label>b562</label>
    </ligand>
    <ligandPart>
        <name>Fe</name>
        <dbReference type="ChEBI" id="CHEBI:18248"/>
    </ligandPart>
</feature>
<feature type="binding site" description="axial binding residue" evidence="2">
    <location>
        <position position="97"/>
    </location>
    <ligand>
        <name>heme b</name>
        <dbReference type="ChEBI" id="CHEBI:60344"/>
        <label>b566</label>
    </ligand>
    <ligandPart>
        <name>Fe</name>
        <dbReference type="ChEBI" id="CHEBI:18248"/>
    </ligandPart>
</feature>
<feature type="binding site" description="axial binding residue" evidence="2">
    <location>
        <position position="182"/>
    </location>
    <ligand>
        <name>heme b</name>
        <dbReference type="ChEBI" id="CHEBI:60344"/>
        <label>b562</label>
    </ligand>
    <ligandPart>
        <name>Fe</name>
        <dbReference type="ChEBI" id="CHEBI:18248"/>
    </ligandPart>
</feature>
<feature type="binding site" description="axial binding residue" evidence="2">
    <location>
        <position position="196"/>
    </location>
    <ligand>
        <name>heme b</name>
        <dbReference type="ChEBI" id="CHEBI:60344"/>
        <label>b566</label>
    </ligand>
    <ligandPart>
        <name>Fe</name>
        <dbReference type="ChEBI" id="CHEBI:18248"/>
    </ligandPart>
</feature>
<feature type="binding site" evidence="2">
    <location>
        <position position="201"/>
    </location>
    <ligand>
        <name>a ubiquinone</name>
        <dbReference type="ChEBI" id="CHEBI:16389"/>
    </ligand>
</feature>
<evidence type="ECO:0000250" key="1"/>
<evidence type="ECO:0000250" key="2">
    <source>
        <dbReference type="UniProtKB" id="P00157"/>
    </source>
</evidence>
<evidence type="ECO:0000255" key="3">
    <source>
        <dbReference type="PROSITE-ProRule" id="PRU00967"/>
    </source>
</evidence>
<evidence type="ECO:0000255" key="4">
    <source>
        <dbReference type="PROSITE-ProRule" id="PRU00968"/>
    </source>
</evidence>
<gene>
    <name type="primary">MT-CYB</name>
    <name type="synonym">COB</name>
    <name type="synonym">CYTB</name>
    <name type="synonym">MTCYB</name>
</gene>